<protein>
    <recommendedName>
        <fullName evidence="1">Maturase K</fullName>
    </recommendedName>
    <alternativeName>
        <fullName evidence="1">Intron maturase</fullName>
    </alternativeName>
</protein>
<reference key="1">
    <citation type="submission" date="2002-03" db="EMBL/GenBank/DDBJ databases">
        <title>Phylogeny of diploxylon Pinus.</title>
        <authorList>
            <person name="Geada-Lopez G."/>
            <person name="Kamiya K."/>
            <person name="Harada K."/>
        </authorList>
    </citation>
    <scope>NUCLEOTIDE SEQUENCE [GENOMIC DNA]</scope>
    <source>
        <tissue>Leaf</tissue>
    </source>
</reference>
<dbReference type="EMBL" id="AB081087">
    <property type="protein sequence ID" value="BAC15588.1"/>
    <property type="molecule type" value="Genomic_DNA"/>
</dbReference>
<dbReference type="GO" id="GO:0009507">
    <property type="term" value="C:chloroplast"/>
    <property type="evidence" value="ECO:0007669"/>
    <property type="project" value="UniProtKB-SubCell"/>
</dbReference>
<dbReference type="GO" id="GO:0003723">
    <property type="term" value="F:RNA binding"/>
    <property type="evidence" value="ECO:0007669"/>
    <property type="project" value="UniProtKB-KW"/>
</dbReference>
<dbReference type="GO" id="GO:0006397">
    <property type="term" value="P:mRNA processing"/>
    <property type="evidence" value="ECO:0007669"/>
    <property type="project" value="UniProtKB-KW"/>
</dbReference>
<dbReference type="GO" id="GO:0008380">
    <property type="term" value="P:RNA splicing"/>
    <property type="evidence" value="ECO:0007669"/>
    <property type="project" value="UniProtKB-UniRule"/>
</dbReference>
<dbReference type="GO" id="GO:0008033">
    <property type="term" value="P:tRNA processing"/>
    <property type="evidence" value="ECO:0007669"/>
    <property type="project" value="UniProtKB-KW"/>
</dbReference>
<dbReference type="HAMAP" id="MF_01390">
    <property type="entry name" value="MatK"/>
    <property type="match status" value="1"/>
</dbReference>
<dbReference type="InterPro" id="IPR024937">
    <property type="entry name" value="Domain_X"/>
</dbReference>
<dbReference type="InterPro" id="IPR002866">
    <property type="entry name" value="Maturase_MatK"/>
</dbReference>
<dbReference type="InterPro" id="IPR024942">
    <property type="entry name" value="Maturase_MatK_N"/>
</dbReference>
<dbReference type="PANTHER" id="PTHR34811">
    <property type="entry name" value="MATURASE K"/>
    <property type="match status" value="1"/>
</dbReference>
<dbReference type="PANTHER" id="PTHR34811:SF1">
    <property type="entry name" value="MATURASE K"/>
    <property type="match status" value="1"/>
</dbReference>
<dbReference type="Pfam" id="PF01348">
    <property type="entry name" value="Intron_maturas2"/>
    <property type="match status" value="1"/>
</dbReference>
<dbReference type="Pfam" id="PF01824">
    <property type="entry name" value="MatK_N"/>
    <property type="match status" value="1"/>
</dbReference>
<organism>
    <name type="scientific">Pinus mugo</name>
    <name type="common">Dwarf mountain pine</name>
    <dbReference type="NCBI Taxonomy" id="28528"/>
    <lineage>
        <taxon>Eukaryota</taxon>
        <taxon>Viridiplantae</taxon>
        <taxon>Streptophyta</taxon>
        <taxon>Embryophyta</taxon>
        <taxon>Tracheophyta</taxon>
        <taxon>Spermatophyta</taxon>
        <taxon>Pinopsida</taxon>
        <taxon>Pinidae</taxon>
        <taxon>Conifers I</taxon>
        <taxon>Pinales</taxon>
        <taxon>Pinaceae</taxon>
        <taxon>Pinus</taxon>
        <taxon>Pinus subgen. Pinus</taxon>
    </lineage>
</organism>
<accession>Q76LC1</accession>
<sequence>MDEFHRCGKEDSFWQQCFLYPLFFQEDLYAISHDHYLDVSSSSRPMEHLSSNDQLSFLTVKRLIGQIRQQNHSIVLFVNCDPNPLADRKKSFYSESVLEALTLVLEVPFSIWSKSSVEGMNECKSFRSIHSIFPFLEDKFPHSNSILDARIPYSIHPEILVRTFRRWIRDAPSLHPLRSVLYDYRNSPENLQRSIIVVPRVNTRFFLFLLNYYVCECESILFSRLKRSSHSRSLSHGSFPQRTHFHRKIKHIIIFSRRNSLKSIWSLKDPKIHYVRYGERPIIAIKGADLLVKKCRYYLLIFRQFYFHLWSEPYRVCSHQLSKNCSSSPGYFLRVRMNPLLVRTKTLDELFIPVLITNEMDPIVPIVPIIGLLATEKFCDISGRPISKLSWTSLTDDDILDRFDQIWRNLFHYYSGSFDRDGLYRIKYILLLSCAKTLACKHKSTIRVVRKELGPELFKKSFSKEREFDSLPFSSKAAARSQRERIWHSDIPQINPLANSWQKIQDLKIENLFDQ</sequence>
<gene>
    <name evidence="1" type="primary">matK</name>
</gene>
<keyword id="KW-0150">Chloroplast</keyword>
<keyword id="KW-0507">mRNA processing</keyword>
<keyword id="KW-0934">Plastid</keyword>
<keyword id="KW-0694">RNA-binding</keyword>
<keyword id="KW-0819">tRNA processing</keyword>
<geneLocation type="chloroplast"/>
<proteinExistence type="inferred from homology"/>
<name>MATK_PINMU</name>
<evidence type="ECO:0000255" key="1">
    <source>
        <dbReference type="HAMAP-Rule" id="MF_01390"/>
    </source>
</evidence>
<comment type="function">
    <text evidence="1">Usually encoded in the trnK tRNA gene intron. Probably assists in splicing its own and other chloroplast group II introns.</text>
</comment>
<comment type="subcellular location">
    <subcellularLocation>
        <location>Plastid</location>
        <location>Chloroplast</location>
    </subcellularLocation>
</comment>
<comment type="similarity">
    <text evidence="1">Belongs to the intron maturase 2 family. MatK subfamily.</text>
</comment>
<feature type="chain" id="PRO_0000143618" description="Maturase K">
    <location>
        <begin position="1"/>
        <end position="515"/>
    </location>
</feature>